<gene>
    <name type="primary">G-TUB</name>
</gene>
<dbReference type="EMBL" id="X62393">
    <property type="protein sequence ID" value="CAA44265.1"/>
    <property type="molecule type" value="mRNA"/>
</dbReference>
<dbReference type="SMR" id="P34787"/>
<dbReference type="GO" id="GO:0005813">
    <property type="term" value="C:centrosome"/>
    <property type="evidence" value="ECO:0007669"/>
    <property type="project" value="UniProtKB-SubCell"/>
</dbReference>
<dbReference type="GO" id="GO:0005737">
    <property type="term" value="C:cytoplasm"/>
    <property type="evidence" value="ECO:0007669"/>
    <property type="project" value="UniProtKB-KW"/>
</dbReference>
<dbReference type="GO" id="GO:0000930">
    <property type="term" value="C:gamma-tubulin complex"/>
    <property type="evidence" value="ECO:0007669"/>
    <property type="project" value="InterPro"/>
</dbReference>
<dbReference type="GO" id="GO:0005874">
    <property type="term" value="C:microtubule"/>
    <property type="evidence" value="ECO:0007669"/>
    <property type="project" value="UniProtKB-KW"/>
</dbReference>
<dbReference type="GO" id="GO:0005525">
    <property type="term" value="F:GTP binding"/>
    <property type="evidence" value="ECO:0007669"/>
    <property type="project" value="UniProtKB-KW"/>
</dbReference>
<dbReference type="GO" id="GO:0031122">
    <property type="term" value="P:cytoplasmic microtubule organization"/>
    <property type="evidence" value="ECO:0007669"/>
    <property type="project" value="InterPro"/>
</dbReference>
<dbReference type="GO" id="GO:0007020">
    <property type="term" value="P:microtubule nucleation"/>
    <property type="evidence" value="ECO:0007669"/>
    <property type="project" value="InterPro"/>
</dbReference>
<dbReference type="CDD" id="cd02188">
    <property type="entry name" value="gamma_tubulin"/>
    <property type="match status" value="1"/>
</dbReference>
<dbReference type="FunFam" id="1.10.287.600:FF:000004">
    <property type="entry name" value="Tubulin gamma chain"/>
    <property type="match status" value="1"/>
</dbReference>
<dbReference type="FunFam" id="3.30.1330.20:FF:000013">
    <property type="entry name" value="Tubulin gamma chain"/>
    <property type="match status" value="1"/>
</dbReference>
<dbReference type="FunFam" id="3.40.50.1440:FF:000027">
    <property type="entry name" value="Tubulin gamma chain"/>
    <property type="match status" value="1"/>
</dbReference>
<dbReference type="Gene3D" id="1.10.287.600">
    <property type="entry name" value="Helix hairpin bin"/>
    <property type="match status" value="1"/>
</dbReference>
<dbReference type="Gene3D" id="3.30.1330.20">
    <property type="entry name" value="Tubulin/FtsZ, C-terminal domain"/>
    <property type="match status" value="1"/>
</dbReference>
<dbReference type="Gene3D" id="3.40.50.1440">
    <property type="entry name" value="Tubulin/FtsZ, GTPase domain"/>
    <property type="match status" value="1"/>
</dbReference>
<dbReference type="InterPro" id="IPR002454">
    <property type="entry name" value="Gamma_tubulin"/>
</dbReference>
<dbReference type="InterPro" id="IPR008280">
    <property type="entry name" value="Tub_FtsZ_C"/>
</dbReference>
<dbReference type="InterPro" id="IPR000217">
    <property type="entry name" value="Tubulin"/>
</dbReference>
<dbReference type="InterPro" id="IPR037103">
    <property type="entry name" value="Tubulin/FtsZ-like_C"/>
</dbReference>
<dbReference type="InterPro" id="IPR018316">
    <property type="entry name" value="Tubulin/FtsZ_2-layer-sand-dom"/>
</dbReference>
<dbReference type="InterPro" id="IPR036525">
    <property type="entry name" value="Tubulin/FtsZ_GTPase_sf"/>
</dbReference>
<dbReference type="InterPro" id="IPR023123">
    <property type="entry name" value="Tubulin_C"/>
</dbReference>
<dbReference type="InterPro" id="IPR017975">
    <property type="entry name" value="Tubulin_CS"/>
</dbReference>
<dbReference type="InterPro" id="IPR003008">
    <property type="entry name" value="Tubulin_FtsZ_GTPase"/>
</dbReference>
<dbReference type="PANTHER" id="PTHR11588">
    <property type="entry name" value="TUBULIN"/>
    <property type="match status" value="1"/>
</dbReference>
<dbReference type="Pfam" id="PF00091">
    <property type="entry name" value="Tubulin"/>
    <property type="match status" value="1"/>
</dbReference>
<dbReference type="Pfam" id="PF03953">
    <property type="entry name" value="Tubulin_C"/>
    <property type="match status" value="1"/>
</dbReference>
<dbReference type="PRINTS" id="PR01164">
    <property type="entry name" value="GAMMATUBULIN"/>
</dbReference>
<dbReference type="PRINTS" id="PR01161">
    <property type="entry name" value="TUBULIN"/>
</dbReference>
<dbReference type="SMART" id="SM00864">
    <property type="entry name" value="Tubulin"/>
    <property type="match status" value="1"/>
</dbReference>
<dbReference type="SMART" id="SM00865">
    <property type="entry name" value="Tubulin_C"/>
    <property type="match status" value="1"/>
</dbReference>
<dbReference type="SUPFAM" id="SSF55307">
    <property type="entry name" value="Tubulin C-terminal domain-like"/>
    <property type="match status" value="1"/>
</dbReference>
<dbReference type="SUPFAM" id="SSF52490">
    <property type="entry name" value="Tubulin nucleotide-binding domain-like"/>
    <property type="match status" value="1"/>
</dbReference>
<dbReference type="PROSITE" id="PS00227">
    <property type="entry name" value="TUBULIN"/>
    <property type="match status" value="1"/>
</dbReference>
<evidence type="ECO:0000255" key="1"/>
<evidence type="ECO:0000305" key="2"/>
<organism>
    <name type="scientific">Plasmodium falciparum (isolate NF54)</name>
    <dbReference type="NCBI Taxonomy" id="5843"/>
    <lineage>
        <taxon>Eukaryota</taxon>
        <taxon>Sar</taxon>
        <taxon>Alveolata</taxon>
        <taxon>Apicomplexa</taxon>
        <taxon>Aconoidasida</taxon>
        <taxon>Haemosporida</taxon>
        <taxon>Plasmodiidae</taxon>
        <taxon>Plasmodium</taxon>
        <taxon>Plasmodium (Laverania)</taxon>
    </lineage>
</organism>
<sequence length="452" mass="51538">MPREIITLQCGQCGNQIGVEFWKQLCNEHNIDQEGILKNNNFLNEDRKDIFFYQADDEHFIPGALLFDLEPRVINSIQTSEYRNLYNPENMFISKEGGGAGNNWGCGYSQGHKVEEEIIDMIDREVDNSDNLEGFILSHSIAGGTGSGMGSYLLELLNDNYSKKMIQTFSVFPLLTNESSDVVVQPYNSILTLKRLILSTDSVVVIDNTSLNRIFVERLKLNNPTFQQTNTIISNVMSASTTTLRYPGSMNNDMISLISSLIINPKCHFLITSYTPITIDKHISNVQKTTVLDVMKRLLHTKNIMVSAPVRRGMYISILNIIRGETDPTQVHKGLQRIRDRKLVNFIKWNPASIQVTLAKQSPHVVSQHKVCGLMMANHTSISTLFERCVTQFDRLYKRRAFLENYKKESMFSSADGQGNFEEMESSKEITQNLIDEYKSAERDDYFTNTYI</sequence>
<proteinExistence type="evidence at transcript level"/>
<reference key="1">
    <citation type="journal article" date="1993" name="Mol. Biochem. Parasitol.">
        <title>The gamma-tubulin gene of the malaria parasite Plasmodium falciparum.</title>
        <authorList>
            <person name="Maessen G.D.F."/>
            <person name="Wesseling J.G."/>
            <person name="Smits M.A."/>
            <person name="Konings R.N.H."/>
            <person name="Schoenmakers J.G.G."/>
        </authorList>
    </citation>
    <scope>NUCLEOTIDE SEQUENCE [MRNA]</scope>
</reference>
<protein>
    <recommendedName>
        <fullName>Tubulin gamma chain</fullName>
    </recommendedName>
    <alternativeName>
        <fullName>Gamma-tubulin</fullName>
    </alternativeName>
</protein>
<feature type="chain" id="PRO_0000048477" description="Tubulin gamma chain">
    <location>
        <begin position="1"/>
        <end position="452"/>
    </location>
</feature>
<feature type="binding site" evidence="1">
    <location>
        <begin position="142"/>
        <end position="148"/>
    </location>
    <ligand>
        <name>GTP</name>
        <dbReference type="ChEBI" id="CHEBI:37565"/>
    </ligand>
</feature>
<name>TBG_PLAFO</name>
<keyword id="KW-0963">Cytoplasm</keyword>
<keyword id="KW-0206">Cytoskeleton</keyword>
<keyword id="KW-0342">GTP-binding</keyword>
<keyword id="KW-0493">Microtubule</keyword>
<keyword id="KW-0547">Nucleotide-binding</keyword>
<comment type="function">
    <text>Tubulin is the major constituent of microtubules. The gamma chain is found at microtubule organizing centers (MTOC) such as the spindle poles or the centrosome, suggesting that it is involved in the minus-end nucleation of microtubule assembly.</text>
</comment>
<comment type="subcellular location">
    <subcellularLocation>
        <location evidence="2">Cytoplasm</location>
        <location evidence="2">Cytoskeleton</location>
        <location evidence="2">Microtubule organizing center</location>
        <location evidence="2">Centrosome</location>
    </subcellularLocation>
</comment>
<comment type="similarity">
    <text evidence="2">Belongs to the tubulin family.</text>
</comment>
<accession>P34787</accession>